<accession>A0KWC7</accession>
<sequence length="98" mass="10947">MALTKAEMAEHLFETLGINKRVAKEMVESFFEEIRGALESGEQVKLSGFGNFDLRDKNQRPGRNPKTGEDIPISARRVVTFRPGQKLKTRVEAANAGK</sequence>
<name>IHFA_SHESA</name>
<evidence type="ECO:0000255" key="1">
    <source>
        <dbReference type="HAMAP-Rule" id="MF_00380"/>
    </source>
</evidence>
<evidence type="ECO:0000256" key="2">
    <source>
        <dbReference type="SAM" id="MobiDB-lite"/>
    </source>
</evidence>
<protein>
    <recommendedName>
        <fullName evidence="1">Integration host factor subunit alpha</fullName>
        <shortName evidence="1">IHF-alpha</shortName>
    </recommendedName>
</protein>
<comment type="function">
    <text evidence="1">This protein is one of the two subunits of integration host factor, a specific DNA-binding protein that functions in genetic recombination as well as in transcriptional and translational control.</text>
</comment>
<comment type="subunit">
    <text evidence="1">Heterodimer of an alpha and a beta chain.</text>
</comment>
<comment type="similarity">
    <text evidence="1">Belongs to the bacterial histone-like protein family.</text>
</comment>
<organism>
    <name type="scientific">Shewanella sp. (strain ANA-3)</name>
    <dbReference type="NCBI Taxonomy" id="94122"/>
    <lineage>
        <taxon>Bacteria</taxon>
        <taxon>Pseudomonadati</taxon>
        <taxon>Pseudomonadota</taxon>
        <taxon>Gammaproteobacteria</taxon>
        <taxon>Alteromonadales</taxon>
        <taxon>Shewanellaceae</taxon>
        <taxon>Shewanella</taxon>
    </lineage>
</organism>
<gene>
    <name evidence="1" type="primary">ihfA</name>
    <name evidence="1" type="synonym">himA</name>
    <name type="ordered locus">Shewana3_1865</name>
</gene>
<feature type="chain" id="PRO_1000060572" description="Integration host factor subunit alpha">
    <location>
        <begin position="1"/>
        <end position="98"/>
    </location>
</feature>
<feature type="region of interest" description="Disordered" evidence="2">
    <location>
        <begin position="49"/>
        <end position="71"/>
    </location>
</feature>
<proteinExistence type="inferred from homology"/>
<dbReference type="EMBL" id="CP000469">
    <property type="protein sequence ID" value="ABK48096.1"/>
    <property type="molecule type" value="Genomic_DNA"/>
</dbReference>
<dbReference type="RefSeq" id="WP_011716870.1">
    <property type="nucleotide sequence ID" value="NC_008577.1"/>
</dbReference>
<dbReference type="SMR" id="A0KWC7"/>
<dbReference type="STRING" id="94122.Shewana3_1865"/>
<dbReference type="GeneID" id="94727814"/>
<dbReference type="KEGG" id="shn:Shewana3_1865"/>
<dbReference type="eggNOG" id="COG0776">
    <property type="taxonomic scope" value="Bacteria"/>
</dbReference>
<dbReference type="HOGENOM" id="CLU_105066_1_3_6"/>
<dbReference type="OrthoDB" id="9797747at2"/>
<dbReference type="Proteomes" id="UP000002589">
    <property type="component" value="Chromosome"/>
</dbReference>
<dbReference type="GO" id="GO:0005829">
    <property type="term" value="C:cytosol"/>
    <property type="evidence" value="ECO:0007669"/>
    <property type="project" value="TreeGrafter"/>
</dbReference>
<dbReference type="GO" id="GO:0003677">
    <property type="term" value="F:DNA binding"/>
    <property type="evidence" value="ECO:0007669"/>
    <property type="project" value="UniProtKB-UniRule"/>
</dbReference>
<dbReference type="GO" id="GO:0030527">
    <property type="term" value="F:structural constituent of chromatin"/>
    <property type="evidence" value="ECO:0007669"/>
    <property type="project" value="InterPro"/>
</dbReference>
<dbReference type="GO" id="GO:0006310">
    <property type="term" value="P:DNA recombination"/>
    <property type="evidence" value="ECO:0007669"/>
    <property type="project" value="UniProtKB-UniRule"/>
</dbReference>
<dbReference type="GO" id="GO:0009893">
    <property type="term" value="P:positive regulation of metabolic process"/>
    <property type="evidence" value="ECO:0007669"/>
    <property type="project" value="UniProtKB-ARBA"/>
</dbReference>
<dbReference type="GO" id="GO:0006355">
    <property type="term" value="P:regulation of DNA-templated transcription"/>
    <property type="evidence" value="ECO:0007669"/>
    <property type="project" value="UniProtKB-UniRule"/>
</dbReference>
<dbReference type="GO" id="GO:0006417">
    <property type="term" value="P:regulation of translation"/>
    <property type="evidence" value="ECO:0007669"/>
    <property type="project" value="UniProtKB-UniRule"/>
</dbReference>
<dbReference type="CDD" id="cd13835">
    <property type="entry name" value="IHF_A"/>
    <property type="match status" value="1"/>
</dbReference>
<dbReference type="FunFam" id="4.10.520.10:FF:000002">
    <property type="entry name" value="Integration host factor subunit alpha"/>
    <property type="match status" value="1"/>
</dbReference>
<dbReference type="Gene3D" id="4.10.520.10">
    <property type="entry name" value="IHF-like DNA-binding proteins"/>
    <property type="match status" value="1"/>
</dbReference>
<dbReference type="HAMAP" id="MF_00380">
    <property type="entry name" value="IHF_alpha"/>
    <property type="match status" value="1"/>
</dbReference>
<dbReference type="InterPro" id="IPR000119">
    <property type="entry name" value="Hist_DNA-bd"/>
</dbReference>
<dbReference type="InterPro" id="IPR020816">
    <property type="entry name" value="Histone-like_DNA-bd_CS"/>
</dbReference>
<dbReference type="InterPro" id="IPR010992">
    <property type="entry name" value="IHF-like_DNA-bd_dom_sf"/>
</dbReference>
<dbReference type="InterPro" id="IPR005684">
    <property type="entry name" value="IHF_alpha"/>
</dbReference>
<dbReference type="NCBIfam" id="TIGR00987">
    <property type="entry name" value="himA"/>
    <property type="match status" value="1"/>
</dbReference>
<dbReference type="NCBIfam" id="NF001401">
    <property type="entry name" value="PRK00285.1"/>
    <property type="match status" value="1"/>
</dbReference>
<dbReference type="PANTHER" id="PTHR33175">
    <property type="entry name" value="DNA-BINDING PROTEIN HU"/>
    <property type="match status" value="1"/>
</dbReference>
<dbReference type="PANTHER" id="PTHR33175:SF2">
    <property type="entry name" value="INTEGRATION HOST FACTOR SUBUNIT ALPHA"/>
    <property type="match status" value="1"/>
</dbReference>
<dbReference type="Pfam" id="PF00216">
    <property type="entry name" value="Bac_DNA_binding"/>
    <property type="match status" value="1"/>
</dbReference>
<dbReference type="PRINTS" id="PR01727">
    <property type="entry name" value="DNABINDINGHU"/>
</dbReference>
<dbReference type="SMART" id="SM00411">
    <property type="entry name" value="BHL"/>
    <property type="match status" value="1"/>
</dbReference>
<dbReference type="SUPFAM" id="SSF47729">
    <property type="entry name" value="IHF-like DNA-binding proteins"/>
    <property type="match status" value="1"/>
</dbReference>
<dbReference type="PROSITE" id="PS00045">
    <property type="entry name" value="HISTONE_LIKE"/>
    <property type="match status" value="1"/>
</dbReference>
<keyword id="KW-0233">DNA recombination</keyword>
<keyword id="KW-0238">DNA-binding</keyword>
<keyword id="KW-0804">Transcription</keyword>
<keyword id="KW-0805">Transcription regulation</keyword>
<keyword id="KW-0810">Translation regulation</keyword>
<reference key="1">
    <citation type="submission" date="2006-09" db="EMBL/GenBank/DDBJ databases">
        <title>Complete sequence of chromosome 1 of Shewanella sp. ANA-3.</title>
        <authorList>
            <person name="Copeland A."/>
            <person name="Lucas S."/>
            <person name="Lapidus A."/>
            <person name="Barry K."/>
            <person name="Detter J.C."/>
            <person name="Glavina del Rio T."/>
            <person name="Hammon N."/>
            <person name="Israni S."/>
            <person name="Dalin E."/>
            <person name="Tice H."/>
            <person name="Pitluck S."/>
            <person name="Chertkov O."/>
            <person name="Brettin T."/>
            <person name="Bruce D."/>
            <person name="Han C."/>
            <person name="Tapia R."/>
            <person name="Gilna P."/>
            <person name="Schmutz J."/>
            <person name="Larimer F."/>
            <person name="Land M."/>
            <person name="Hauser L."/>
            <person name="Kyrpides N."/>
            <person name="Kim E."/>
            <person name="Newman D."/>
            <person name="Salticov C."/>
            <person name="Konstantinidis K."/>
            <person name="Klappenback J."/>
            <person name="Tiedje J."/>
            <person name="Richardson P."/>
        </authorList>
    </citation>
    <scope>NUCLEOTIDE SEQUENCE [LARGE SCALE GENOMIC DNA]</scope>
    <source>
        <strain>ANA-3</strain>
    </source>
</reference>